<comment type="function">
    <text evidence="1">F(1)F(0) ATP synthase produces ATP from ADP in the presence of a proton or sodium gradient. F-type ATPases consist of two structural domains, F(1) containing the extramembraneous catalytic core and F(0) containing the membrane proton channel, linked together by a central stalk and a peripheral stalk. During catalysis, ATP synthesis in the catalytic domain of F(1) is coupled via a rotary mechanism of the central stalk subunits to proton translocation.</text>
</comment>
<comment type="function">
    <text evidence="1">This protein is part of the stalk that links CF(0) to CF(1). It either transmits conformational changes from CF(0) to CF(1) or is implicated in proton conduction.</text>
</comment>
<comment type="subunit">
    <text evidence="1">F-type ATPases have 2 components, F(1) - the catalytic core - and F(0) - the membrane proton channel. F(1) has five subunits: alpha(3), beta(3), gamma(1), delta(1), epsilon(1). F(0) has three main subunits: a(1), b(2) and c(10-14). The alpha and beta chains form an alternating ring which encloses part of the gamma chain. F(1) is attached to F(0) by a central stalk formed by the gamma and epsilon chains, while a peripheral stalk is formed by the delta and b chains.</text>
</comment>
<comment type="subcellular location">
    <subcellularLocation>
        <location evidence="1">Cell membrane</location>
        <topology evidence="1">Peripheral membrane protein</topology>
    </subcellularLocation>
</comment>
<comment type="similarity">
    <text evidence="1">Belongs to the ATPase delta chain family.</text>
</comment>
<feature type="chain" id="PRO_1000184671" description="ATP synthase subunit delta">
    <location>
        <begin position="1"/>
        <end position="179"/>
    </location>
</feature>
<reference key="1">
    <citation type="journal article" date="2007" name="PLoS ONE">
        <title>Analysis of the neurotoxin complex genes in Clostridium botulinum A1-A4 and B1 strains: BoNT/A3, /Ba4 and /B1 clusters are located within plasmids.</title>
        <authorList>
            <person name="Smith T.J."/>
            <person name="Hill K.K."/>
            <person name="Foley B.T."/>
            <person name="Detter J.C."/>
            <person name="Munk A.C."/>
            <person name="Bruce D.C."/>
            <person name="Doggett N.A."/>
            <person name="Smith L.A."/>
            <person name="Marks J.D."/>
            <person name="Xie G."/>
            <person name="Brettin T.S."/>
        </authorList>
    </citation>
    <scope>NUCLEOTIDE SEQUENCE [LARGE SCALE GENOMIC DNA]</scope>
    <source>
        <strain>ATCC 19397 / Type A</strain>
    </source>
</reference>
<keyword id="KW-0066">ATP synthesis</keyword>
<keyword id="KW-1003">Cell membrane</keyword>
<keyword id="KW-0139">CF(1)</keyword>
<keyword id="KW-0375">Hydrogen ion transport</keyword>
<keyword id="KW-0406">Ion transport</keyword>
<keyword id="KW-0472">Membrane</keyword>
<keyword id="KW-0813">Transport</keyword>
<organism>
    <name type="scientific">Clostridium botulinum (strain ATCC 19397 / Type A)</name>
    <dbReference type="NCBI Taxonomy" id="441770"/>
    <lineage>
        <taxon>Bacteria</taxon>
        <taxon>Bacillati</taxon>
        <taxon>Bacillota</taxon>
        <taxon>Clostridia</taxon>
        <taxon>Eubacteriales</taxon>
        <taxon>Clostridiaceae</taxon>
        <taxon>Clostridium</taxon>
    </lineage>
</organism>
<sequence length="179" mass="21315">MYEYLDRRYALALYEVAEENNKVDEYLRDLKEVVNIIKNSEDICKILKHPEINTSRKKEIFTELFKDKVDDKILSFLLVLIEKDRILYLEEKLKEMEKIYLEKNNMILANIKTVIPLLKEEREELIEKLGNKYNKKIILEEEIDKSIIGGVYVRVGDDVLDGTLSTRLKDIKKMMLKRE</sequence>
<proteinExistence type="inferred from homology"/>
<name>ATPD_CLOB1</name>
<evidence type="ECO:0000255" key="1">
    <source>
        <dbReference type="HAMAP-Rule" id="MF_01416"/>
    </source>
</evidence>
<dbReference type="EMBL" id="CP000726">
    <property type="protein sequence ID" value="ABS33318.1"/>
    <property type="molecule type" value="Genomic_DNA"/>
</dbReference>
<dbReference type="RefSeq" id="WP_011947988.1">
    <property type="nucleotide sequence ID" value="NC_009697.1"/>
</dbReference>
<dbReference type="SMR" id="A7FQH6"/>
<dbReference type="KEGG" id="cba:CLB_0189"/>
<dbReference type="HOGENOM" id="CLU_085114_4_0_9"/>
<dbReference type="GO" id="GO:0005886">
    <property type="term" value="C:plasma membrane"/>
    <property type="evidence" value="ECO:0007669"/>
    <property type="project" value="UniProtKB-SubCell"/>
</dbReference>
<dbReference type="GO" id="GO:0045259">
    <property type="term" value="C:proton-transporting ATP synthase complex"/>
    <property type="evidence" value="ECO:0007669"/>
    <property type="project" value="UniProtKB-KW"/>
</dbReference>
<dbReference type="GO" id="GO:0046933">
    <property type="term" value="F:proton-transporting ATP synthase activity, rotational mechanism"/>
    <property type="evidence" value="ECO:0007669"/>
    <property type="project" value="UniProtKB-UniRule"/>
</dbReference>
<dbReference type="Gene3D" id="1.10.520.20">
    <property type="entry name" value="N-terminal domain of the delta subunit of the F1F0-ATP synthase"/>
    <property type="match status" value="1"/>
</dbReference>
<dbReference type="HAMAP" id="MF_01416">
    <property type="entry name" value="ATP_synth_delta_bact"/>
    <property type="match status" value="1"/>
</dbReference>
<dbReference type="InterPro" id="IPR026015">
    <property type="entry name" value="ATP_synth_OSCP/delta_N_sf"/>
</dbReference>
<dbReference type="InterPro" id="IPR020781">
    <property type="entry name" value="ATPase_OSCP/d_CS"/>
</dbReference>
<dbReference type="InterPro" id="IPR000711">
    <property type="entry name" value="ATPase_OSCP/dsu"/>
</dbReference>
<dbReference type="NCBIfam" id="TIGR01145">
    <property type="entry name" value="ATP_synt_delta"/>
    <property type="match status" value="1"/>
</dbReference>
<dbReference type="NCBIfam" id="NF004403">
    <property type="entry name" value="PRK05758.2-4"/>
    <property type="match status" value="1"/>
</dbReference>
<dbReference type="PANTHER" id="PTHR11910">
    <property type="entry name" value="ATP SYNTHASE DELTA CHAIN"/>
    <property type="match status" value="1"/>
</dbReference>
<dbReference type="Pfam" id="PF00213">
    <property type="entry name" value="OSCP"/>
    <property type="match status" value="1"/>
</dbReference>
<dbReference type="PRINTS" id="PR00125">
    <property type="entry name" value="ATPASEDELTA"/>
</dbReference>
<dbReference type="SUPFAM" id="SSF47928">
    <property type="entry name" value="N-terminal domain of the delta subunit of the F1F0-ATP synthase"/>
    <property type="match status" value="1"/>
</dbReference>
<dbReference type="SUPFAM" id="SSF160527">
    <property type="entry name" value="V-type ATPase subunit E-like"/>
    <property type="match status" value="1"/>
</dbReference>
<dbReference type="PROSITE" id="PS00389">
    <property type="entry name" value="ATPASE_DELTA"/>
    <property type="match status" value="1"/>
</dbReference>
<accession>A7FQH6</accession>
<protein>
    <recommendedName>
        <fullName evidence="1">ATP synthase subunit delta</fullName>
    </recommendedName>
    <alternativeName>
        <fullName evidence="1">ATP synthase F(1) sector subunit delta</fullName>
    </alternativeName>
    <alternativeName>
        <fullName evidence="1">F-type ATPase subunit delta</fullName>
        <shortName evidence="1">F-ATPase subunit delta</shortName>
    </alternativeName>
</protein>
<gene>
    <name evidence="1" type="primary">atpH</name>
    <name type="ordered locus">CLB_0189</name>
</gene>